<feature type="chain" id="PRO_0000299228" description="Movement protein">
    <location>
        <begin position="1"/>
        <end position="294"/>
    </location>
</feature>
<gene>
    <name type="primary">3</name>
</gene>
<evidence type="ECO:0000250" key="1"/>
<evidence type="ECO:0000269" key="2">
    <source>
    </source>
</evidence>
<accession>Q98663</accession>
<reference key="1">
    <citation type="journal article" date="2003" name="J. Gen. Virol.">
        <title>Novel structure of the genome of Rice yellow stunt virus: identification of the gene 6-encoded virion protein.</title>
        <authorList>
            <person name="Huang Y."/>
            <person name="Zhao H."/>
            <person name="Luo Z."/>
            <person name="Chen X."/>
            <person name="Fang R.X."/>
        </authorList>
    </citation>
    <scope>NUCLEOTIDE SEQUENCE [GENOMIC RNA]</scope>
</reference>
<reference key="2">
    <citation type="journal article" date="2005" name="J. Virol.">
        <title>Identification of a movement protein of rice yellow stunt rhabdovirus.</title>
        <authorList>
            <person name="Huang Y.W."/>
            <person name="Geng Y.F."/>
            <person name="Ying X.B."/>
            <person name="Chen X.Y."/>
            <person name="Fang R.X."/>
        </authorList>
    </citation>
    <scope>CHARACTERIZATION</scope>
    <scope>INTERACTION WITH NUCLEOPROTEIN</scope>
</reference>
<organism>
    <name type="scientific">Rice yellow stunt virus</name>
    <name type="common">RYSV</name>
    <name type="synonym">Rice transitory yellowing virus</name>
    <dbReference type="NCBI Taxonomy" id="59380"/>
    <lineage>
        <taxon>Viruses</taxon>
        <taxon>Riboviria</taxon>
        <taxon>Orthornavirae</taxon>
        <taxon>Negarnaviricota</taxon>
        <taxon>Haploviricotina</taxon>
        <taxon>Monjiviricetes</taxon>
        <taxon>Mononegavirales</taxon>
        <taxon>Rhabdoviridae</taxon>
        <taxon>Betarhabdovirinae</taxon>
        <taxon>Alphanucleorhabdovirus</taxon>
        <taxon>Alphanucleorhabdovirus oryzae</taxon>
    </lineage>
</organism>
<keyword id="KW-0945">Host-virus interaction</keyword>
<keyword id="KW-1185">Reference proteome</keyword>
<keyword id="KW-0694">RNA-binding</keyword>
<keyword id="KW-0813">Transport</keyword>
<keyword id="KW-0916">Viral movement protein</keyword>
<sequence length="294" mass="32800">MGEGKNHQSFSFKNADDEIDLSLSKFSLFKLKMAKSKIIKVFGQNDPVDPNNCYINMRSIKITTSSVLPESDPKYLIWEMSYKTDEEDHTLGQLAWKASYNGTFIVTTTYAMMVTGGELYTPYTAVIRSSDGNEIKGVKVKVTLSWDPANDRPSKARMGGFIQDMYCKTITNGKTQISPMVGWYIGQDERRYCKVLNKSALEFSSEGIYPLMELVSGADSVINPLINKLISGMLNDEEKRRVSLYTSTVGAGTSLTQSEKLLLKKLVESKTGSGLVQFLMRACKELGTDVYLEA</sequence>
<name>MVP_RYSV</name>
<protein>
    <recommendedName>
        <fullName>Movement protein</fullName>
        <shortName>MP</shortName>
    </recommendedName>
    <alternativeName>
        <fullName>Cell-to-cell transport protein</fullName>
    </alternativeName>
    <alternativeName>
        <fullName>Protein 3</fullName>
    </alternativeName>
</protein>
<dbReference type="EMBL" id="AB011257">
    <property type="protein sequence ID" value="BAA25156.1"/>
    <property type="molecule type" value="Genomic_RNA"/>
</dbReference>
<dbReference type="RefSeq" id="NP_620498.1">
    <property type="nucleotide sequence ID" value="NC_003746.1"/>
</dbReference>
<dbReference type="SMR" id="Q98663"/>
<dbReference type="GeneID" id="944311"/>
<dbReference type="KEGG" id="vg:944311"/>
<dbReference type="Proteomes" id="UP000002325">
    <property type="component" value="Genome"/>
</dbReference>
<dbReference type="GO" id="GO:0003723">
    <property type="term" value="F:RNA binding"/>
    <property type="evidence" value="ECO:0007669"/>
    <property type="project" value="UniProtKB-KW"/>
</dbReference>
<dbReference type="GO" id="GO:0046740">
    <property type="term" value="P:transport of virus in host, cell to cell"/>
    <property type="evidence" value="ECO:0007669"/>
    <property type="project" value="UniProtKB-KW"/>
</dbReference>
<proteinExistence type="evidence at protein level"/>
<organismHost>
    <name type="scientific">Oryza sativa</name>
    <name type="common">Rice</name>
    <dbReference type="NCBI Taxonomy" id="4530"/>
</organismHost>
<comment type="function">
    <text evidence="1">Transports viral genome to neighboring plant cells directly through plasmosdesmata, without any budding. The movement protein allows efficient cell to cell propagation, by bypassing the host cell wall barrier. Displays an RNA-binding activity (By similarity).</text>
</comment>
<comment type="subunit">
    <text evidence="2">Interacts with nucleoprotein.</text>
</comment>